<accession>Q89Q75</accession>
<keyword id="KW-0997">Cell inner membrane</keyword>
<keyword id="KW-1003">Cell membrane</keyword>
<keyword id="KW-0169">Cobalamin biosynthesis</keyword>
<keyword id="KW-0460">Magnesium</keyword>
<keyword id="KW-0472">Membrane</keyword>
<keyword id="KW-1185">Reference proteome</keyword>
<keyword id="KW-0808">Transferase</keyword>
<keyword id="KW-0812">Transmembrane</keyword>
<keyword id="KW-1133">Transmembrane helix</keyword>
<organism>
    <name type="scientific">Bradyrhizobium diazoefficiens (strain JCM 10833 / BCRC 13528 / IAM 13628 / NBRC 14792 / USDA 110)</name>
    <dbReference type="NCBI Taxonomy" id="224911"/>
    <lineage>
        <taxon>Bacteria</taxon>
        <taxon>Pseudomonadati</taxon>
        <taxon>Pseudomonadota</taxon>
        <taxon>Alphaproteobacteria</taxon>
        <taxon>Hyphomicrobiales</taxon>
        <taxon>Nitrobacteraceae</taxon>
        <taxon>Bradyrhizobium</taxon>
    </lineage>
</organism>
<comment type="function">
    <text evidence="1">Joins adenosylcobinamide-GDP and alpha-ribazole to generate adenosylcobalamin (Ado-cobalamin). Also synthesizes adenosylcobalamin 5'-phosphate from adenosylcobinamide-GDP and alpha-ribazole 5'-phosphate.</text>
</comment>
<comment type="catalytic activity">
    <reaction evidence="1">
        <text>alpha-ribazole + adenosylcob(III)inamide-GDP = adenosylcob(III)alamin + GMP + H(+)</text>
        <dbReference type="Rhea" id="RHEA:16049"/>
        <dbReference type="ChEBI" id="CHEBI:10329"/>
        <dbReference type="ChEBI" id="CHEBI:15378"/>
        <dbReference type="ChEBI" id="CHEBI:18408"/>
        <dbReference type="ChEBI" id="CHEBI:58115"/>
        <dbReference type="ChEBI" id="CHEBI:60487"/>
        <dbReference type="EC" id="2.7.8.26"/>
    </reaction>
</comment>
<comment type="catalytic activity">
    <reaction evidence="1">
        <text>alpha-ribazole 5'-phosphate + adenosylcob(III)inamide-GDP = adenosylcob(III)alamin 5'-phosphate + GMP + H(+)</text>
        <dbReference type="Rhea" id="RHEA:23560"/>
        <dbReference type="ChEBI" id="CHEBI:15378"/>
        <dbReference type="ChEBI" id="CHEBI:57918"/>
        <dbReference type="ChEBI" id="CHEBI:58115"/>
        <dbReference type="ChEBI" id="CHEBI:60487"/>
        <dbReference type="ChEBI" id="CHEBI:60493"/>
        <dbReference type="EC" id="2.7.8.26"/>
    </reaction>
</comment>
<comment type="cofactor">
    <cofactor evidence="1">
        <name>Mg(2+)</name>
        <dbReference type="ChEBI" id="CHEBI:18420"/>
    </cofactor>
</comment>
<comment type="pathway">
    <text evidence="1">Cofactor biosynthesis; adenosylcobalamin biosynthesis; adenosylcobalamin from cob(II)yrinate a,c-diamide: step 7/7.</text>
</comment>
<comment type="subcellular location">
    <subcellularLocation>
        <location evidence="1">Cell inner membrane</location>
        <topology evidence="1">Multi-pass membrane protein</topology>
    </subcellularLocation>
</comment>
<comment type="similarity">
    <text evidence="1">Belongs to the CobS family.</text>
</comment>
<protein>
    <recommendedName>
        <fullName evidence="1">Adenosylcobinamide-GDP ribazoletransferase</fullName>
        <ecNumber evidence="1">2.7.8.26</ecNumber>
    </recommendedName>
    <alternativeName>
        <fullName evidence="1">Cobalamin synthase</fullName>
    </alternativeName>
    <alternativeName>
        <fullName evidence="1">Cobalamin-5'-phosphate synthase</fullName>
    </alternativeName>
</protein>
<dbReference type="EC" id="2.7.8.26" evidence="1"/>
<dbReference type="EMBL" id="BA000040">
    <property type="protein sequence ID" value="BAC48520.1"/>
    <property type="molecule type" value="Genomic_DNA"/>
</dbReference>
<dbReference type="RefSeq" id="NP_769895.1">
    <property type="nucleotide sequence ID" value="NC_004463.1"/>
</dbReference>
<dbReference type="RefSeq" id="WP_011086039.1">
    <property type="nucleotide sequence ID" value="NC_004463.1"/>
</dbReference>
<dbReference type="FunCoup" id="Q89Q75">
    <property type="interactions" value="263"/>
</dbReference>
<dbReference type="STRING" id="224911.AAV28_13310"/>
<dbReference type="EnsemblBacteria" id="BAC48520">
    <property type="protein sequence ID" value="BAC48520"/>
    <property type="gene ID" value="BAC48520"/>
</dbReference>
<dbReference type="GeneID" id="46490290"/>
<dbReference type="KEGG" id="bja:bll3255"/>
<dbReference type="PATRIC" id="fig|224911.44.peg.2900"/>
<dbReference type="eggNOG" id="COG0368">
    <property type="taxonomic scope" value="Bacteria"/>
</dbReference>
<dbReference type="HOGENOM" id="CLU_057426_1_0_5"/>
<dbReference type="InParanoid" id="Q89Q75"/>
<dbReference type="OrthoDB" id="9794626at2"/>
<dbReference type="PhylomeDB" id="Q89Q75"/>
<dbReference type="UniPathway" id="UPA00148">
    <property type="reaction ID" value="UER00238"/>
</dbReference>
<dbReference type="Proteomes" id="UP000002526">
    <property type="component" value="Chromosome"/>
</dbReference>
<dbReference type="GO" id="GO:0005886">
    <property type="term" value="C:plasma membrane"/>
    <property type="evidence" value="ECO:0007669"/>
    <property type="project" value="UniProtKB-SubCell"/>
</dbReference>
<dbReference type="GO" id="GO:0051073">
    <property type="term" value="F:adenosylcobinamide-GDP ribazoletransferase activity"/>
    <property type="evidence" value="ECO:0007669"/>
    <property type="project" value="UniProtKB-UniRule"/>
</dbReference>
<dbReference type="GO" id="GO:0008818">
    <property type="term" value="F:cobalamin 5'-phosphate synthase activity"/>
    <property type="evidence" value="ECO:0007669"/>
    <property type="project" value="UniProtKB-UniRule"/>
</dbReference>
<dbReference type="GO" id="GO:0009236">
    <property type="term" value="P:cobalamin biosynthetic process"/>
    <property type="evidence" value="ECO:0000318"/>
    <property type="project" value="GO_Central"/>
</dbReference>
<dbReference type="HAMAP" id="MF_00719">
    <property type="entry name" value="CobS"/>
    <property type="match status" value="1"/>
</dbReference>
<dbReference type="InterPro" id="IPR003805">
    <property type="entry name" value="CobS"/>
</dbReference>
<dbReference type="NCBIfam" id="TIGR00317">
    <property type="entry name" value="cobS"/>
    <property type="match status" value="1"/>
</dbReference>
<dbReference type="PANTHER" id="PTHR34148">
    <property type="entry name" value="ADENOSYLCOBINAMIDE-GDP RIBAZOLETRANSFERASE"/>
    <property type="match status" value="1"/>
</dbReference>
<dbReference type="PANTHER" id="PTHR34148:SF1">
    <property type="entry name" value="ADENOSYLCOBINAMIDE-GDP RIBAZOLETRANSFERASE"/>
    <property type="match status" value="1"/>
</dbReference>
<dbReference type="Pfam" id="PF02654">
    <property type="entry name" value="CobS"/>
    <property type="match status" value="1"/>
</dbReference>
<feature type="chain" id="PRO_0000146866" description="Adenosylcobinamide-GDP ribazoletransferase">
    <location>
        <begin position="1"/>
        <end position="260"/>
    </location>
</feature>
<feature type="transmembrane region" description="Helical" evidence="1">
    <location>
        <begin position="42"/>
        <end position="62"/>
    </location>
</feature>
<feature type="transmembrane region" description="Helical" evidence="1">
    <location>
        <begin position="68"/>
        <end position="88"/>
    </location>
</feature>
<feature type="transmembrane region" description="Helical" evidence="1">
    <location>
        <begin position="118"/>
        <end position="137"/>
    </location>
</feature>
<feature type="transmembrane region" description="Helical" evidence="1">
    <location>
        <begin position="144"/>
        <end position="166"/>
    </location>
</feature>
<feature type="transmembrane region" description="Helical" evidence="1">
    <location>
        <begin position="180"/>
        <end position="200"/>
    </location>
</feature>
<feature type="transmembrane region" description="Helical" evidence="1">
    <location>
        <begin position="201"/>
        <end position="221"/>
    </location>
</feature>
<feature type="transmembrane region" description="Helical" evidence="1">
    <location>
        <begin position="237"/>
        <end position="257"/>
    </location>
</feature>
<evidence type="ECO:0000255" key="1">
    <source>
        <dbReference type="HAMAP-Rule" id="MF_00719"/>
    </source>
</evidence>
<proteinExistence type="inferred from homology"/>
<gene>
    <name evidence="1" type="primary">cobS</name>
    <name type="ordered locus">bll3255</name>
</gene>
<name>COBS_BRADU</name>
<reference key="1">
    <citation type="journal article" date="2002" name="DNA Res.">
        <title>Complete genomic sequence of nitrogen-fixing symbiotic bacterium Bradyrhizobium japonicum USDA110.</title>
        <authorList>
            <person name="Kaneko T."/>
            <person name="Nakamura Y."/>
            <person name="Sato S."/>
            <person name="Minamisawa K."/>
            <person name="Uchiumi T."/>
            <person name="Sasamoto S."/>
            <person name="Watanabe A."/>
            <person name="Idesawa K."/>
            <person name="Iriguchi M."/>
            <person name="Kawashima K."/>
            <person name="Kohara M."/>
            <person name="Matsumoto M."/>
            <person name="Shimpo S."/>
            <person name="Tsuruoka H."/>
            <person name="Wada T."/>
            <person name="Yamada M."/>
            <person name="Tabata S."/>
        </authorList>
    </citation>
    <scope>NUCLEOTIDE SEQUENCE [LARGE SCALE GENOMIC DNA]</scope>
    <source>
        <strain>JCM 10833 / BCRC 13528 / IAM 13628 / NBRC 14792 / USDA 110</strain>
    </source>
</reference>
<sequence length="260" mass="26251">MIPGTETIRNVIADLRIAASFVTLLPVGSSKPAADGAIARATWALPVAGLLVGLAGALVYKISSRLGLTPNLAALLALATTALITGALHEDGLADTADGLGGGRTRERKLEIMRDSRIGTYGVCALILSFGLRWSALAAIANPWLVTLALCAAHCAARAGVPAFMSLVPPARPDGLSASAGAPPGRSVAIAFAVGTLVLTLALGPGKALVGLILLSLAGLILARLAIRQIGGQTGDILGAFEQTGEIVILLVAAAFQMGR</sequence>